<feature type="chain" id="PRO_1000200219" description="Probable ECA polymerase">
    <location>
        <begin position="1"/>
        <end position="452"/>
    </location>
</feature>
<feature type="transmembrane region" description="Helical" evidence="1">
    <location>
        <begin position="6"/>
        <end position="26"/>
    </location>
</feature>
<feature type="transmembrane region" description="Helical" evidence="1">
    <location>
        <begin position="37"/>
        <end position="57"/>
    </location>
</feature>
<feature type="transmembrane region" description="Helical" evidence="1">
    <location>
        <begin position="63"/>
        <end position="83"/>
    </location>
</feature>
<feature type="transmembrane region" description="Helical" evidence="1">
    <location>
        <begin position="118"/>
        <end position="138"/>
    </location>
</feature>
<feature type="transmembrane region" description="Helical" evidence="1">
    <location>
        <begin position="155"/>
        <end position="175"/>
    </location>
</feature>
<feature type="transmembrane region" description="Helical" evidence="1">
    <location>
        <begin position="181"/>
        <end position="201"/>
    </location>
</feature>
<feature type="transmembrane region" description="Helical" evidence="1">
    <location>
        <begin position="207"/>
        <end position="227"/>
    </location>
</feature>
<feature type="transmembrane region" description="Helical" evidence="1">
    <location>
        <begin position="228"/>
        <end position="248"/>
    </location>
</feature>
<feature type="transmembrane region" description="Helical" evidence="1">
    <location>
        <begin position="341"/>
        <end position="361"/>
    </location>
</feature>
<feature type="transmembrane region" description="Helical" evidence="1">
    <location>
        <begin position="378"/>
        <end position="398"/>
    </location>
</feature>
<feature type="transmembrane region" description="Helical" evidence="1">
    <location>
        <begin position="410"/>
        <end position="430"/>
    </location>
</feature>
<keyword id="KW-0997">Cell inner membrane</keyword>
<keyword id="KW-1003">Cell membrane</keyword>
<keyword id="KW-0472">Membrane</keyword>
<keyword id="KW-0812">Transmembrane</keyword>
<keyword id="KW-1133">Transmembrane helix</keyword>
<proteinExistence type="inferred from homology"/>
<dbReference type="EMBL" id="CP001127">
    <property type="protein sequence ID" value="ACF89798.1"/>
    <property type="molecule type" value="Genomic_DNA"/>
</dbReference>
<dbReference type="RefSeq" id="WP_000055605.1">
    <property type="nucleotide sequence ID" value="NC_011094.1"/>
</dbReference>
<dbReference type="KEGG" id="sew:SeSA_A4139"/>
<dbReference type="HOGENOM" id="CLU_049711_0_0_6"/>
<dbReference type="UniPathway" id="UPA00566"/>
<dbReference type="Proteomes" id="UP000001865">
    <property type="component" value="Chromosome"/>
</dbReference>
<dbReference type="GO" id="GO:0005886">
    <property type="term" value="C:plasma membrane"/>
    <property type="evidence" value="ECO:0007669"/>
    <property type="project" value="UniProtKB-SubCell"/>
</dbReference>
<dbReference type="GO" id="GO:0009246">
    <property type="term" value="P:enterobacterial common antigen biosynthetic process"/>
    <property type="evidence" value="ECO:0007669"/>
    <property type="project" value="UniProtKB-UniRule"/>
</dbReference>
<dbReference type="HAMAP" id="MF_01003">
    <property type="entry name" value="WzyE"/>
    <property type="match status" value="1"/>
</dbReference>
<dbReference type="InterPro" id="IPR010691">
    <property type="entry name" value="WzyE"/>
</dbReference>
<dbReference type="NCBIfam" id="NF002820">
    <property type="entry name" value="PRK02975.1"/>
    <property type="match status" value="1"/>
</dbReference>
<dbReference type="Pfam" id="PF06899">
    <property type="entry name" value="WzyE"/>
    <property type="match status" value="1"/>
</dbReference>
<accession>B4TNU6</accession>
<name>WZYE_SALSV</name>
<reference key="1">
    <citation type="journal article" date="2011" name="J. Bacteriol.">
        <title>Comparative genomics of 28 Salmonella enterica isolates: evidence for CRISPR-mediated adaptive sublineage evolution.</title>
        <authorList>
            <person name="Fricke W.F."/>
            <person name="Mammel M.K."/>
            <person name="McDermott P.F."/>
            <person name="Tartera C."/>
            <person name="White D.G."/>
            <person name="Leclerc J.E."/>
            <person name="Ravel J."/>
            <person name="Cebula T.A."/>
        </authorList>
    </citation>
    <scope>NUCLEOTIDE SEQUENCE [LARGE SCALE GENOMIC DNA]</scope>
    <source>
        <strain>CVM19633</strain>
    </source>
</reference>
<evidence type="ECO:0000255" key="1">
    <source>
        <dbReference type="HAMAP-Rule" id="MF_01003"/>
    </source>
</evidence>
<protein>
    <recommendedName>
        <fullName evidence="1">Probable ECA polymerase</fullName>
    </recommendedName>
</protein>
<gene>
    <name evidence="1" type="primary">wzyE</name>
    <name type="ordered locus">SeSA_A4139</name>
</gene>
<sequence>MSLMQFSGLLVVWLLSTLFIATLTWFEFRRVRFNFNVFFSLLFLLTFFFGFPLTSVLVFRFDVGVAPPEILLQALLSAACFYGVYYVTYKTRLRKRVVDVPRKPLFTMNRVETHLTWVILMGIALVSVAIFFMHNGFLLFRLHSYSQIFSSEVSGVALKRFFYFFIPAMLVVYFLRQDSKAWLFFLVSTVAFGLLTYMIVGGTRANIIIAFAIFLFIGIIRGWISLWMLAAAGVLGIVGMFWLALKRYGLNVSGDEAFYTFLYLTRDTFSPWENLALLLQNYHNIDFQGLAPIVRDFYVFIPTWLWPGRPSIVLNSANYFTWEVLNNHSGLAISPTLIGSLVVMGGALFIPLGAIVVGLIIKWFDWLYELGNREPNRYKAAILHSFCFGAIFNMIVLAREGLDSFVSRVVFFLVVFGASLLVAKLLFWLFDSAGLIHKRTTSLPQAQVEGKL</sequence>
<comment type="function">
    <text evidence="1">Probably involved in the polymerization of enterobacterial common antigen (ECA) trisaccharide repeat units.</text>
</comment>
<comment type="pathway">
    <text evidence="1">Bacterial outer membrane biogenesis; enterobacterial common antigen biosynthesis.</text>
</comment>
<comment type="subunit">
    <text evidence="1">Probably part of a complex composed of WzxE, WzyE and WzzE.</text>
</comment>
<comment type="subcellular location">
    <subcellularLocation>
        <location evidence="1">Cell inner membrane</location>
        <topology evidence="1">Multi-pass membrane protein</topology>
    </subcellularLocation>
</comment>
<comment type="similarity">
    <text evidence="1">Belongs to the WzyE family.</text>
</comment>
<organism>
    <name type="scientific">Salmonella schwarzengrund (strain CVM19633)</name>
    <dbReference type="NCBI Taxonomy" id="439843"/>
    <lineage>
        <taxon>Bacteria</taxon>
        <taxon>Pseudomonadati</taxon>
        <taxon>Pseudomonadota</taxon>
        <taxon>Gammaproteobacteria</taxon>
        <taxon>Enterobacterales</taxon>
        <taxon>Enterobacteriaceae</taxon>
        <taxon>Salmonella</taxon>
    </lineage>
</organism>